<proteinExistence type="inferred from homology"/>
<dbReference type="EC" id="2.1.2.1" evidence="1"/>
<dbReference type="EMBL" id="AE016826">
    <property type="protein sequence ID" value="AAO26993.1"/>
    <property type="molecule type" value="Genomic_DNA"/>
</dbReference>
<dbReference type="RefSeq" id="WP_011091394.1">
    <property type="nucleotide sequence ID" value="NC_004545.1"/>
</dbReference>
<dbReference type="SMR" id="P59432"/>
<dbReference type="STRING" id="224915.bbp_268"/>
<dbReference type="KEGG" id="bab:bbp_268"/>
<dbReference type="eggNOG" id="COG0112">
    <property type="taxonomic scope" value="Bacteria"/>
</dbReference>
<dbReference type="HOGENOM" id="CLU_022477_2_1_6"/>
<dbReference type="OrthoDB" id="9803846at2"/>
<dbReference type="UniPathway" id="UPA00193"/>
<dbReference type="UniPathway" id="UPA00288">
    <property type="reaction ID" value="UER01023"/>
</dbReference>
<dbReference type="Proteomes" id="UP000000601">
    <property type="component" value="Chromosome"/>
</dbReference>
<dbReference type="GO" id="GO:0005829">
    <property type="term" value="C:cytosol"/>
    <property type="evidence" value="ECO:0007669"/>
    <property type="project" value="TreeGrafter"/>
</dbReference>
<dbReference type="GO" id="GO:0004372">
    <property type="term" value="F:glycine hydroxymethyltransferase activity"/>
    <property type="evidence" value="ECO:0007669"/>
    <property type="project" value="UniProtKB-UniRule"/>
</dbReference>
<dbReference type="GO" id="GO:0030170">
    <property type="term" value="F:pyridoxal phosphate binding"/>
    <property type="evidence" value="ECO:0007669"/>
    <property type="project" value="UniProtKB-UniRule"/>
</dbReference>
<dbReference type="GO" id="GO:0019264">
    <property type="term" value="P:glycine biosynthetic process from serine"/>
    <property type="evidence" value="ECO:0007669"/>
    <property type="project" value="UniProtKB-UniRule"/>
</dbReference>
<dbReference type="GO" id="GO:0035999">
    <property type="term" value="P:tetrahydrofolate interconversion"/>
    <property type="evidence" value="ECO:0007669"/>
    <property type="project" value="UniProtKB-UniRule"/>
</dbReference>
<dbReference type="CDD" id="cd00378">
    <property type="entry name" value="SHMT"/>
    <property type="match status" value="1"/>
</dbReference>
<dbReference type="FunFam" id="3.40.640.10:FF:000001">
    <property type="entry name" value="Serine hydroxymethyltransferase"/>
    <property type="match status" value="1"/>
</dbReference>
<dbReference type="FunFam" id="3.90.1150.10:FF:000003">
    <property type="entry name" value="Serine hydroxymethyltransferase"/>
    <property type="match status" value="1"/>
</dbReference>
<dbReference type="Gene3D" id="3.90.1150.10">
    <property type="entry name" value="Aspartate Aminotransferase, domain 1"/>
    <property type="match status" value="1"/>
</dbReference>
<dbReference type="Gene3D" id="3.40.640.10">
    <property type="entry name" value="Type I PLP-dependent aspartate aminotransferase-like (Major domain)"/>
    <property type="match status" value="1"/>
</dbReference>
<dbReference type="HAMAP" id="MF_00051">
    <property type="entry name" value="SHMT"/>
    <property type="match status" value="1"/>
</dbReference>
<dbReference type="InterPro" id="IPR015424">
    <property type="entry name" value="PyrdxlP-dep_Trfase"/>
</dbReference>
<dbReference type="InterPro" id="IPR015421">
    <property type="entry name" value="PyrdxlP-dep_Trfase_major"/>
</dbReference>
<dbReference type="InterPro" id="IPR015422">
    <property type="entry name" value="PyrdxlP-dep_Trfase_small"/>
</dbReference>
<dbReference type="InterPro" id="IPR001085">
    <property type="entry name" value="Ser_HO-MeTrfase"/>
</dbReference>
<dbReference type="InterPro" id="IPR049943">
    <property type="entry name" value="Ser_HO-MeTrfase-like"/>
</dbReference>
<dbReference type="InterPro" id="IPR019798">
    <property type="entry name" value="Ser_HO-MeTrfase_PLP_BS"/>
</dbReference>
<dbReference type="InterPro" id="IPR039429">
    <property type="entry name" value="SHMT-like_dom"/>
</dbReference>
<dbReference type="NCBIfam" id="NF000586">
    <property type="entry name" value="PRK00011.1"/>
    <property type="match status" value="1"/>
</dbReference>
<dbReference type="PANTHER" id="PTHR11680">
    <property type="entry name" value="SERINE HYDROXYMETHYLTRANSFERASE"/>
    <property type="match status" value="1"/>
</dbReference>
<dbReference type="PANTHER" id="PTHR11680:SF50">
    <property type="entry name" value="SERINE HYDROXYMETHYLTRANSFERASE"/>
    <property type="match status" value="1"/>
</dbReference>
<dbReference type="Pfam" id="PF00464">
    <property type="entry name" value="SHMT"/>
    <property type="match status" value="1"/>
</dbReference>
<dbReference type="PIRSF" id="PIRSF000412">
    <property type="entry name" value="SHMT"/>
    <property type="match status" value="1"/>
</dbReference>
<dbReference type="SUPFAM" id="SSF53383">
    <property type="entry name" value="PLP-dependent transferases"/>
    <property type="match status" value="1"/>
</dbReference>
<dbReference type="PROSITE" id="PS00096">
    <property type="entry name" value="SHMT"/>
    <property type="match status" value="1"/>
</dbReference>
<sequence length="417" mass="46455">MFIKNKTISNYDADVYRMMKQEYQRQENHIELIASENYVSSCVMEAQGSQLTNKYAEGYPGKRYYGGCDYVDAIEKIAIKRAKKLFNANYANVQPHSGSQANYAVYSALLKPNDIVLGMSLSHGGHLTHGSSVNFSGKLYKFISYGLDISGDIDYPQIRKLAHRYKPKMIVGGFSAYSGICNWKLLREIADEINSYLFVDMAHISGLVAAGLYPNPLKYAHVVTSTTHKTLSGPRGGLILAKGDNVSLFKKLNSSVFPGCQGGPLMHVIAAKAIAFKEAMEPEFKDYQYQVIKNAQEMAKTFISRGYKVVSGKTFNHLLLLDLSNKNITGKRADILLHSANIIVNKNSIPNDLLSPFITSGIRIGTPAITRRGFTELESRQVSNWICDILDNFNNIEISAKVKQKVLNLCSLFPVYK</sequence>
<gene>
    <name evidence="1" type="primary">glyA</name>
    <name type="ordered locus">bbp_268</name>
</gene>
<feature type="chain" id="PRO_0000113549" description="Serine hydroxymethyltransferase">
    <location>
        <begin position="1"/>
        <end position="417"/>
    </location>
</feature>
<feature type="binding site" evidence="1">
    <location>
        <position position="121"/>
    </location>
    <ligand>
        <name>(6S)-5,6,7,8-tetrahydrofolate</name>
        <dbReference type="ChEBI" id="CHEBI:57453"/>
    </ligand>
</feature>
<feature type="binding site" evidence="1">
    <location>
        <begin position="125"/>
        <end position="127"/>
    </location>
    <ligand>
        <name>(6S)-5,6,7,8-tetrahydrofolate</name>
        <dbReference type="ChEBI" id="CHEBI:57453"/>
    </ligand>
</feature>
<feature type="binding site" evidence="1">
    <location>
        <begin position="355"/>
        <end position="357"/>
    </location>
    <ligand>
        <name>(6S)-5,6,7,8-tetrahydrofolate</name>
        <dbReference type="ChEBI" id="CHEBI:57453"/>
    </ligand>
</feature>
<feature type="site" description="Plays an important role in substrate specificity" evidence="1">
    <location>
        <position position="228"/>
    </location>
</feature>
<feature type="modified residue" description="N6-(pyridoxal phosphate)lysine" evidence="1">
    <location>
        <position position="229"/>
    </location>
</feature>
<name>GLYA_BUCBP</name>
<accession>P59432</accession>
<organism>
    <name type="scientific">Buchnera aphidicola subsp. Baizongia pistaciae (strain Bp)</name>
    <dbReference type="NCBI Taxonomy" id="224915"/>
    <lineage>
        <taxon>Bacteria</taxon>
        <taxon>Pseudomonadati</taxon>
        <taxon>Pseudomonadota</taxon>
        <taxon>Gammaproteobacteria</taxon>
        <taxon>Enterobacterales</taxon>
        <taxon>Erwiniaceae</taxon>
        <taxon>Buchnera</taxon>
    </lineage>
</organism>
<keyword id="KW-0028">Amino-acid biosynthesis</keyword>
<keyword id="KW-0963">Cytoplasm</keyword>
<keyword id="KW-0554">One-carbon metabolism</keyword>
<keyword id="KW-0663">Pyridoxal phosphate</keyword>
<keyword id="KW-1185">Reference proteome</keyword>
<keyword id="KW-0808">Transferase</keyword>
<comment type="function">
    <text evidence="1">Catalyzes the reversible interconversion of serine and glycine with tetrahydrofolate (THF) serving as the one-carbon carrier. This reaction serves as the major source of one-carbon groups required for the biosynthesis of purines, thymidylate, methionine, and other important biomolecules. Also exhibits THF-independent aldolase activity toward beta-hydroxyamino acids, producing glycine and aldehydes, via a retro-aldol mechanism.</text>
</comment>
<comment type="catalytic activity">
    <reaction evidence="1">
        <text>(6R)-5,10-methylene-5,6,7,8-tetrahydrofolate + glycine + H2O = (6S)-5,6,7,8-tetrahydrofolate + L-serine</text>
        <dbReference type="Rhea" id="RHEA:15481"/>
        <dbReference type="ChEBI" id="CHEBI:15377"/>
        <dbReference type="ChEBI" id="CHEBI:15636"/>
        <dbReference type="ChEBI" id="CHEBI:33384"/>
        <dbReference type="ChEBI" id="CHEBI:57305"/>
        <dbReference type="ChEBI" id="CHEBI:57453"/>
        <dbReference type="EC" id="2.1.2.1"/>
    </reaction>
</comment>
<comment type="cofactor">
    <cofactor evidence="1">
        <name>pyridoxal 5'-phosphate</name>
        <dbReference type="ChEBI" id="CHEBI:597326"/>
    </cofactor>
</comment>
<comment type="pathway">
    <text evidence="1">One-carbon metabolism; tetrahydrofolate interconversion.</text>
</comment>
<comment type="pathway">
    <text evidence="1">Amino-acid biosynthesis; glycine biosynthesis; glycine from L-serine: step 1/1.</text>
</comment>
<comment type="subunit">
    <text evidence="1">Homodimer.</text>
</comment>
<comment type="subcellular location">
    <subcellularLocation>
        <location evidence="1">Cytoplasm</location>
    </subcellularLocation>
</comment>
<comment type="similarity">
    <text evidence="1">Belongs to the SHMT family.</text>
</comment>
<protein>
    <recommendedName>
        <fullName evidence="1">Serine hydroxymethyltransferase</fullName>
        <shortName evidence="1">SHMT</shortName>
        <shortName evidence="1">Serine methylase</shortName>
        <ecNumber evidence="1">2.1.2.1</ecNumber>
    </recommendedName>
</protein>
<evidence type="ECO:0000255" key="1">
    <source>
        <dbReference type="HAMAP-Rule" id="MF_00051"/>
    </source>
</evidence>
<reference key="1">
    <citation type="journal article" date="2003" name="Proc. Natl. Acad. Sci. U.S.A.">
        <title>Reductive genome evolution in Buchnera aphidicola.</title>
        <authorList>
            <person name="van Ham R.C.H.J."/>
            <person name="Kamerbeek J."/>
            <person name="Palacios C."/>
            <person name="Rausell C."/>
            <person name="Abascal F."/>
            <person name="Bastolla U."/>
            <person name="Fernandez J.M."/>
            <person name="Jimenez L."/>
            <person name="Postigo M."/>
            <person name="Silva F.J."/>
            <person name="Tamames J."/>
            <person name="Viguera E."/>
            <person name="Latorre A."/>
            <person name="Valencia A."/>
            <person name="Moran F."/>
            <person name="Moya A."/>
        </authorList>
    </citation>
    <scope>NUCLEOTIDE SEQUENCE [LARGE SCALE GENOMIC DNA]</scope>
    <source>
        <strain>Bp</strain>
    </source>
</reference>